<proteinExistence type="inferred from homology"/>
<organism>
    <name type="scientific">Prochlorococcus marinus (strain AS9601)</name>
    <dbReference type="NCBI Taxonomy" id="146891"/>
    <lineage>
        <taxon>Bacteria</taxon>
        <taxon>Bacillati</taxon>
        <taxon>Cyanobacteriota</taxon>
        <taxon>Cyanophyceae</taxon>
        <taxon>Synechococcales</taxon>
        <taxon>Prochlorococcaceae</taxon>
        <taxon>Prochlorococcus</taxon>
    </lineage>
</organism>
<dbReference type="EMBL" id="CP000551">
    <property type="protein sequence ID" value="ABM71149.1"/>
    <property type="molecule type" value="Genomic_DNA"/>
</dbReference>
<dbReference type="RefSeq" id="WP_011819267.1">
    <property type="nucleotide sequence ID" value="NC_008816.1"/>
</dbReference>
<dbReference type="SMR" id="A2BTN8"/>
<dbReference type="STRING" id="146891.A9601_18661"/>
<dbReference type="KEGG" id="pmb:A9601_18661"/>
<dbReference type="eggNOG" id="COG1219">
    <property type="taxonomic scope" value="Bacteria"/>
</dbReference>
<dbReference type="HOGENOM" id="CLU_014218_8_2_3"/>
<dbReference type="OrthoDB" id="9804062at2"/>
<dbReference type="Proteomes" id="UP000002590">
    <property type="component" value="Chromosome"/>
</dbReference>
<dbReference type="GO" id="GO:0009376">
    <property type="term" value="C:HslUV protease complex"/>
    <property type="evidence" value="ECO:0007669"/>
    <property type="project" value="TreeGrafter"/>
</dbReference>
<dbReference type="GO" id="GO:0005524">
    <property type="term" value="F:ATP binding"/>
    <property type="evidence" value="ECO:0007669"/>
    <property type="project" value="UniProtKB-UniRule"/>
</dbReference>
<dbReference type="GO" id="GO:0016887">
    <property type="term" value="F:ATP hydrolysis activity"/>
    <property type="evidence" value="ECO:0007669"/>
    <property type="project" value="InterPro"/>
</dbReference>
<dbReference type="GO" id="GO:0140662">
    <property type="term" value="F:ATP-dependent protein folding chaperone"/>
    <property type="evidence" value="ECO:0007669"/>
    <property type="project" value="InterPro"/>
</dbReference>
<dbReference type="GO" id="GO:0046983">
    <property type="term" value="F:protein dimerization activity"/>
    <property type="evidence" value="ECO:0007669"/>
    <property type="project" value="InterPro"/>
</dbReference>
<dbReference type="GO" id="GO:0051082">
    <property type="term" value="F:unfolded protein binding"/>
    <property type="evidence" value="ECO:0007669"/>
    <property type="project" value="UniProtKB-UniRule"/>
</dbReference>
<dbReference type="GO" id="GO:0008270">
    <property type="term" value="F:zinc ion binding"/>
    <property type="evidence" value="ECO:0007669"/>
    <property type="project" value="InterPro"/>
</dbReference>
<dbReference type="GO" id="GO:0051301">
    <property type="term" value="P:cell division"/>
    <property type="evidence" value="ECO:0007669"/>
    <property type="project" value="TreeGrafter"/>
</dbReference>
<dbReference type="GO" id="GO:0051603">
    <property type="term" value="P:proteolysis involved in protein catabolic process"/>
    <property type="evidence" value="ECO:0007669"/>
    <property type="project" value="TreeGrafter"/>
</dbReference>
<dbReference type="CDD" id="cd19497">
    <property type="entry name" value="RecA-like_ClpX"/>
    <property type="match status" value="1"/>
</dbReference>
<dbReference type="FunFam" id="1.10.8.60:FF:000002">
    <property type="entry name" value="ATP-dependent Clp protease ATP-binding subunit ClpX"/>
    <property type="match status" value="1"/>
</dbReference>
<dbReference type="FunFam" id="3.40.50.300:FF:000005">
    <property type="entry name" value="ATP-dependent Clp protease ATP-binding subunit ClpX"/>
    <property type="match status" value="1"/>
</dbReference>
<dbReference type="Gene3D" id="1.10.8.60">
    <property type="match status" value="1"/>
</dbReference>
<dbReference type="Gene3D" id="6.20.220.10">
    <property type="entry name" value="ClpX chaperone, C4-type zinc finger domain"/>
    <property type="match status" value="1"/>
</dbReference>
<dbReference type="Gene3D" id="3.40.50.300">
    <property type="entry name" value="P-loop containing nucleotide triphosphate hydrolases"/>
    <property type="match status" value="1"/>
</dbReference>
<dbReference type="HAMAP" id="MF_00175">
    <property type="entry name" value="ClpX"/>
    <property type="match status" value="1"/>
</dbReference>
<dbReference type="InterPro" id="IPR003593">
    <property type="entry name" value="AAA+_ATPase"/>
</dbReference>
<dbReference type="InterPro" id="IPR050052">
    <property type="entry name" value="ATP-dep_Clp_protease_ClpX"/>
</dbReference>
<dbReference type="InterPro" id="IPR003959">
    <property type="entry name" value="ATPase_AAA_core"/>
</dbReference>
<dbReference type="InterPro" id="IPR019489">
    <property type="entry name" value="Clp_ATPase_C"/>
</dbReference>
<dbReference type="InterPro" id="IPR004487">
    <property type="entry name" value="Clp_protease_ATP-bd_su_ClpX"/>
</dbReference>
<dbReference type="InterPro" id="IPR046425">
    <property type="entry name" value="ClpX_bact"/>
</dbReference>
<dbReference type="InterPro" id="IPR027417">
    <property type="entry name" value="P-loop_NTPase"/>
</dbReference>
<dbReference type="InterPro" id="IPR010603">
    <property type="entry name" value="Znf_CppX_C4"/>
</dbReference>
<dbReference type="InterPro" id="IPR038366">
    <property type="entry name" value="Znf_CppX_C4_sf"/>
</dbReference>
<dbReference type="NCBIfam" id="TIGR00382">
    <property type="entry name" value="clpX"/>
    <property type="match status" value="1"/>
</dbReference>
<dbReference type="NCBIfam" id="NF003745">
    <property type="entry name" value="PRK05342.1"/>
    <property type="match status" value="1"/>
</dbReference>
<dbReference type="PANTHER" id="PTHR48102:SF7">
    <property type="entry name" value="ATP-DEPENDENT CLP PROTEASE ATP-BINDING SUBUNIT CLPX-LIKE, MITOCHONDRIAL"/>
    <property type="match status" value="1"/>
</dbReference>
<dbReference type="PANTHER" id="PTHR48102">
    <property type="entry name" value="ATP-DEPENDENT CLP PROTEASE ATP-BINDING SUBUNIT CLPX-LIKE, MITOCHONDRIAL-RELATED"/>
    <property type="match status" value="1"/>
</dbReference>
<dbReference type="Pfam" id="PF07724">
    <property type="entry name" value="AAA_2"/>
    <property type="match status" value="1"/>
</dbReference>
<dbReference type="Pfam" id="PF10431">
    <property type="entry name" value="ClpB_D2-small"/>
    <property type="match status" value="1"/>
</dbReference>
<dbReference type="Pfam" id="PF06689">
    <property type="entry name" value="zf-C4_ClpX"/>
    <property type="match status" value="1"/>
</dbReference>
<dbReference type="SMART" id="SM00382">
    <property type="entry name" value="AAA"/>
    <property type="match status" value="1"/>
</dbReference>
<dbReference type="SMART" id="SM01086">
    <property type="entry name" value="ClpB_D2-small"/>
    <property type="match status" value="1"/>
</dbReference>
<dbReference type="SMART" id="SM00994">
    <property type="entry name" value="zf-C4_ClpX"/>
    <property type="match status" value="1"/>
</dbReference>
<dbReference type="SUPFAM" id="SSF57716">
    <property type="entry name" value="Glucocorticoid receptor-like (DNA-binding domain)"/>
    <property type="match status" value="1"/>
</dbReference>
<dbReference type="SUPFAM" id="SSF52540">
    <property type="entry name" value="P-loop containing nucleoside triphosphate hydrolases"/>
    <property type="match status" value="1"/>
</dbReference>
<dbReference type="PROSITE" id="PS51902">
    <property type="entry name" value="CLPX_ZB"/>
    <property type="match status" value="1"/>
</dbReference>
<feature type="chain" id="PRO_1000024617" description="ATP-dependent Clp protease ATP-binding subunit ClpX">
    <location>
        <begin position="1"/>
        <end position="455"/>
    </location>
</feature>
<feature type="domain" description="ClpX-type ZB" evidence="2">
    <location>
        <begin position="1"/>
        <end position="51"/>
    </location>
</feature>
<feature type="region of interest" description="Disordered" evidence="3">
    <location>
        <begin position="51"/>
        <end position="75"/>
    </location>
</feature>
<feature type="binding site" evidence="2">
    <location>
        <position position="10"/>
    </location>
    <ligand>
        <name>Zn(2+)</name>
        <dbReference type="ChEBI" id="CHEBI:29105"/>
    </ligand>
</feature>
<feature type="binding site" evidence="2">
    <location>
        <position position="13"/>
    </location>
    <ligand>
        <name>Zn(2+)</name>
        <dbReference type="ChEBI" id="CHEBI:29105"/>
    </ligand>
</feature>
<feature type="binding site" evidence="2">
    <location>
        <position position="32"/>
    </location>
    <ligand>
        <name>Zn(2+)</name>
        <dbReference type="ChEBI" id="CHEBI:29105"/>
    </ligand>
</feature>
<feature type="binding site" evidence="2">
    <location>
        <position position="35"/>
    </location>
    <ligand>
        <name>Zn(2+)</name>
        <dbReference type="ChEBI" id="CHEBI:29105"/>
    </ligand>
</feature>
<feature type="binding site" evidence="1">
    <location>
        <begin position="146"/>
        <end position="153"/>
    </location>
    <ligand>
        <name>ATP</name>
        <dbReference type="ChEBI" id="CHEBI:30616"/>
    </ligand>
</feature>
<gene>
    <name evidence="1" type="primary">clpX</name>
    <name type="ordered locus">A9601_18661</name>
</gene>
<sequence length="455" mass="50531">MAKFDAHLKCSFCGKSQDQVRKLIAGPGVYICDECIDLCNEILDEELLDNQANTNNPPQVKKKLPTDNPKKSVPLELTSIPKPLEIKSFLDNQVVGQESAKKILSVAVYNHYKRLAWKVKEDSKNNNATDSQATKLQKSNILLIGPTGSGKTLLAQTLAEFLDVPFAVADATTLTEAGYVGEDVENILLRLLQKSEMNVELAQKGIIYIDEIDKIARKSENPSITRDVSGEGVQQALLKMLEGTIANVPPQGGRKHPYHDCIQIDTSQILFICGGAFIGLEDIVQKRMGKHSIGFTTNSDQNKVDTKKIVDPRDSLKNLELDDLVKYGLIPEFIGRIPVCAVLDRLTKETLESILTQPRDALVKQFKTLLSMDNVELSFEPDSVEAIANEAYKRKTGARALRSIIEELMLDIMYTLPSEENVKEFTITKKMVDNLFSSKIVKLPSGSKRIIKESA</sequence>
<reference key="1">
    <citation type="journal article" date="2007" name="PLoS Genet.">
        <title>Patterns and implications of gene gain and loss in the evolution of Prochlorococcus.</title>
        <authorList>
            <person name="Kettler G.C."/>
            <person name="Martiny A.C."/>
            <person name="Huang K."/>
            <person name="Zucker J."/>
            <person name="Coleman M.L."/>
            <person name="Rodrigue S."/>
            <person name="Chen F."/>
            <person name="Lapidus A."/>
            <person name="Ferriera S."/>
            <person name="Johnson J."/>
            <person name="Steglich C."/>
            <person name="Church G.M."/>
            <person name="Richardson P."/>
            <person name="Chisholm S.W."/>
        </authorList>
    </citation>
    <scope>NUCLEOTIDE SEQUENCE [LARGE SCALE GENOMIC DNA]</scope>
    <source>
        <strain>AS9601</strain>
    </source>
</reference>
<comment type="function">
    <text evidence="1">ATP-dependent specificity component of the Clp protease. It directs the protease to specific substrates. Can perform chaperone functions in the absence of ClpP.</text>
</comment>
<comment type="subunit">
    <text evidence="1">Component of the ClpX-ClpP complex. Forms a hexameric ring that, in the presence of ATP, binds to fourteen ClpP subunits assembled into a disk-like structure with a central cavity, resembling the structure of eukaryotic proteasomes.</text>
</comment>
<comment type="similarity">
    <text evidence="1">Belongs to the ClpX chaperone family.</text>
</comment>
<accession>A2BTN8</accession>
<keyword id="KW-0067">ATP-binding</keyword>
<keyword id="KW-0143">Chaperone</keyword>
<keyword id="KW-0479">Metal-binding</keyword>
<keyword id="KW-0547">Nucleotide-binding</keyword>
<keyword id="KW-0862">Zinc</keyword>
<evidence type="ECO:0000255" key="1">
    <source>
        <dbReference type="HAMAP-Rule" id="MF_00175"/>
    </source>
</evidence>
<evidence type="ECO:0000255" key="2">
    <source>
        <dbReference type="PROSITE-ProRule" id="PRU01250"/>
    </source>
</evidence>
<evidence type="ECO:0000256" key="3">
    <source>
        <dbReference type="SAM" id="MobiDB-lite"/>
    </source>
</evidence>
<name>CLPX_PROMS</name>
<protein>
    <recommendedName>
        <fullName evidence="1">ATP-dependent Clp protease ATP-binding subunit ClpX</fullName>
    </recommendedName>
</protein>